<name>TPIS_BUCBP</name>
<evidence type="ECO:0000255" key="1">
    <source>
        <dbReference type="HAMAP-Rule" id="MF_00147"/>
    </source>
</evidence>
<proteinExistence type="inferred from homology"/>
<protein>
    <recommendedName>
        <fullName evidence="1">Triosephosphate isomerase</fullName>
        <shortName evidence="1">TIM</shortName>
        <shortName evidence="1">TPI</shortName>
        <ecNumber evidence="1">5.3.1.1</ecNumber>
    </recommendedName>
    <alternativeName>
        <fullName evidence="1">Triose-phosphate isomerase</fullName>
    </alternativeName>
</protein>
<keyword id="KW-0963">Cytoplasm</keyword>
<keyword id="KW-0312">Gluconeogenesis</keyword>
<keyword id="KW-0324">Glycolysis</keyword>
<keyword id="KW-0413">Isomerase</keyword>
<keyword id="KW-1185">Reference proteome</keyword>
<accession>P59462</accession>
<comment type="function">
    <text evidence="1">Involved in the gluconeogenesis. Catalyzes stereospecifically the conversion of dihydroxyacetone phosphate (DHAP) to D-glyceraldehyde-3-phosphate (G3P).</text>
</comment>
<comment type="catalytic activity">
    <reaction evidence="1">
        <text>D-glyceraldehyde 3-phosphate = dihydroxyacetone phosphate</text>
        <dbReference type="Rhea" id="RHEA:18585"/>
        <dbReference type="ChEBI" id="CHEBI:57642"/>
        <dbReference type="ChEBI" id="CHEBI:59776"/>
        <dbReference type="EC" id="5.3.1.1"/>
    </reaction>
</comment>
<comment type="pathway">
    <text evidence="1">Carbohydrate biosynthesis; gluconeogenesis.</text>
</comment>
<comment type="pathway">
    <text evidence="1">Carbohydrate degradation; glycolysis; D-glyceraldehyde 3-phosphate from glycerone phosphate: step 1/1.</text>
</comment>
<comment type="subunit">
    <text evidence="1">Homodimer.</text>
</comment>
<comment type="subcellular location">
    <subcellularLocation>
        <location evidence="1">Cytoplasm</location>
    </subcellularLocation>
</comment>
<comment type="similarity">
    <text evidence="1">Belongs to the triosephosphate isomerase family.</text>
</comment>
<organism>
    <name type="scientific">Buchnera aphidicola subsp. Baizongia pistaciae (strain Bp)</name>
    <dbReference type="NCBI Taxonomy" id="224915"/>
    <lineage>
        <taxon>Bacteria</taxon>
        <taxon>Pseudomonadati</taxon>
        <taxon>Pseudomonadota</taxon>
        <taxon>Gammaproteobacteria</taxon>
        <taxon>Enterobacterales</taxon>
        <taxon>Erwiniaceae</taxon>
        <taxon>Buchnera</taxon>
    </lineage>
</organism>
<reference key="1">
    <citation type="journal article" date="2003" name="Proc. Natl. Acad. Sci. U.S.A.">
        <title>Reductive genome evolution in Buchnera aphidicola.</title>
        <authorList>
            <person name="van Ham R.C.H.J."/>
            <person name="Kamerbeek J."/>
            <person name="Palacios C."/>
            <person name="Rausell C."/>
            <person name="Abascal F."/>
            <person name="Bastolla U."/>
            <person name="Fernandez J.M."/>
            <person name="Jimenez L."/>
            <person name="Postigo M."/>
            <person name="Silva F.J."/>
            <person name="Tamames J."/>
            <person name="Viguera E."/>
            <person name="Latorre A."/>
            <person name="Valencia A."/>
            <person name="Moran F."/>
            <person name="Moya A."/>
        </authorList>
    </citation>
    <scope>NUCLEOTIDE SEQUENCE [LARGE SCALE GENOMIC DNA]</scope>
    <source>
        <strain>Bp</strain>
    </source>
</reference>
<gene>
    <name evidence="1" type="primary">tpiA</name>
    <name type="ordered locus">bbp_285</name>
</gene>
<feature type="chain" id="PRO_0000090197" description="Triosephosphate isomerase">
    <location>
        <begin position="1"/>
        <end position="252"/>
    </location>
</feature>
<feature type="active site" description="Electrophile" evidence="1">
    <location>
        <position position="98"/>
    </location>
</feature>
<feature type="active site" description="Proton acceptor" evidence="1">
    <location>
        <position position="170"/>
    </location>
</feature>
<feature type="binding site" evidence="1">
    <location>
        <begin position="9"/>
        <end position="11"/>
    </location>
    <ligand>
        <name>substrate</name>
    </ligand>
</feature>
<feature type="binding site" evidence="1">
    <location>
        <position position="176"/>
    </location>
    <ligand>
        <name>substrate</name>
    </ligand>
</feature>
<feature type="binding site" evidence="1">
    <location>
        <position position="215"/>
    </location>
    <ligand>
        <name>substrate</name>
    </ligand>
</feature>
<sequence length="252" mass="28690">MKKKIIIANWKLNGNIQLLQTLLKPLVNFYIRHKNKSSIKLVIMPPYVYLYPMKSIISHSSILLGSQNVDINLIGAFTGEVSINMLKDVGVSYVLVGHSERRQYHRENDVIIAKKFKIVKDSHLIPVLCIGETEHEYLSCKTEKICKFQIDAIFDLLGPSGFNNSVIAYEPKWAIGTNTIPSINFIQKILMFIQNYIFNKQNSTIKLFSLQYGGSVNEHNIIELYDVKNIDGFLVGSASLSLDFFKKLLNNC</sequence>
<dbReference type="EC" id="5.3.1.1" evidence="1"/>
<dbReference type="EMBL" id="AE016826">
    <property type="protein sequence ID" value="AAO27010.1"/>
    <property type="molecule type" value="Genomic_DNA"/>
</dbReference>
<dbReference type="RefSeq" id="WP_011091411.1">
    <property type="nucleotide sequence ID" value="NC_004545.1"/>
</dbReference>
<dbReference type="SMR" id="P59462"/>
<dbReference type="STRING" id="224915.bbp_285"/>
<dbReference type="KEGG" id="bab:bbp_285"/>
<dbReference type="eggNOG" id="COG0149">
    <property type="taxonomic scope" value="Bacteria"/>
</dbReference>
<dbReference type="HOGENOM" id="CLU_024251_2_1_6"/>
<dbReference type="OrthoDB" id="9809429at2"/>
<dbReference type="UniPathway" id="UPA00109">
    <property type="reaction ID" value="UER00189"/>
</dbReference>
<dbReference type="UniPathway" id="UPA00138"/>
<dbReference type="Proteomes" id="UP000000601">
    <property type="component" value="Chromosome"/>
</dbReference>
<dbReference type="GO" id="GO:0005829">
    <property type="term" value="C:cytosol"/>
    <property type="evidence" value="ECO:0007669"/>
    <property type="project" value="TreeGrafter"/>
</dbReference>
<dbReference type="GO" id="GO:0004807">
    <property type="term" value="F:triose-phosphate isomerase activity"/>
    <property type="evidence" value="ECO:0007669"/>
    <property type="project" value="UniProtKB-UniRule"/>
</dbReference>
<dbReference type="GO" id="GO:0006094">
    <property type="term" value="P:gluconeogenesis"/>
    <property type="evidence" value="ECO:0007669"/>
    <property type="project" value="UniProtKB-UniRule"/>
</dbReference>
<dbReference type="GO" id="GO:0046166">
    <property type="term" value="P:glyceraldehyde-3-phosphate biosynthetic process"/>
    <property type="evidence" value="ECO:0007669"/>
    <property type="project" value="TreeGrafter"/>
</dbReference>
<dbReference type="GO" id="GO:0019563">
    <property type="term" value="P:glycerol catabolic process"/>
    <property type="evidence" value="ECO:0007669"/>
    <property type="project" value="TreeGrafter"/>
</dbReference>
<dbReference type="GO" id="GO:0006096">
    <property type="term" value="P:glycolytic process"/>
    <property type="evidence" value="ECO:0007669"/>
    <property type="project" value="UniProtKB-UniRule"/>
</dbReference>
<dbReference type="CDD" id="cd00311">
    <property type="entry name" value="TIM"/>
    <property type="match status" value="1"/>
</dbReference>
<dbReference type="Gene3D" id="3.20.20.70">
    <property type="entry name" value="Aldolase class I"/>
    <property type="match status" value="1"/>
</dbReference>
<dbReference type="HAMAP" id="MF_00147_B">
    <property type="entry name" value="TIM_B"/>
    <property type="match status" value="1"/>
</dbReference>
<dbReference type="InterPro" id="IPR013785">
    <property type="entry name" value="Aldolase_TIM"/>
</dbReference>
<dbReference type="InterPro" id="IPR035990">
    <property type="entry name" value="TIM_sf"/>
</dbReference>
<dbReference type="InterPro" id="IPR022896">
    <property type="entry name" value="TrioseP_Isoase_bac/euk"/>
</dbReference>
<dbReference type="InterPro" id="IPR000652">
    <property type="entry name" value="Triosephosphate_isomerase"/>
</dbReference>
<dbReference type="InterPro" id="IPR020861">
    <property type="entry name" value="Triosephosphate_isomerase_AS"/>
</dbReference>
<dbReference type="NCBIfam" id="TIGR00419">
    <property type="entry name" value="tim"/>
    <property type="match status" value="1"/>
</dbReference>
<dbReference type="PANTHER" id="PTHR21139">
    <property type="entry name" value="TRIOSEPHOSPHATE ISOMERASE"/>
    <property type="match status" value="1"/>
</dbReference>
<dbReference type="PANTHER" id="PTHR21139:SF42">
    <property type="entry name" value="TRIOSEPHOSPHATE ISOMERASE"/>
    <property type="match status" value="1"/>
</dbReference>
<dbReference type="Pfam" id="PF00121">
    <property type="entry name" value="TIM"/>
    <property type="match status" value="1"/>
</dbReference>
<dbReference type="SUPFAM" id="SSF51351">
    <property type="entry name" value="Triosephosphate isomerase (TIM)"/>
    <property type="match status" value="1"/>
</dbReference>
<dbReference type="PROSITE" id="PS00171">
    <property type="entry name" value="TIM_1"/>
    <property type="match status" value="1"/>
</dbReference>
<dbReference type="PROSITE" id="PS51440">
    <property type="entry name" value="TIM_2"/>
    <property type="match status" value="1"/>
</dbReference>